<keyword id="KW-0131">Cell cycle</keyword>
<keyword id="KW-0132">Cell division</keyword>
<keyword id="KW-0133">Cell shape</keyword>
<keyword id="KW-0961">Cell wall biogenesis/degradation</keyword>
<keyword id="KW-0963">Cytoplasm</keyword>
<keyword id="KW-0573">Peptidoglycan synthesis</keyword>
<keyword id="KW-0670">Pyruvate</keyword>
<keyword id="KW-0808">Transferase</keyword>
<reference key="1">
    <citation type="journal article" date="2008" name="Biol. Direct">
        <title>Complete genome sequence of the extremely acidophilic methanotroph isolate V4, Methylacidiphilum infernorum, a representative of the bacterial phylum Verrucomicrobia.</title>
        <authorList>
            <person name="Hou S."/>
            <person name="Makarova K.S."/>
            <person name="Saw J.H."/>
            <person name="Senin P."/>
            <person name="Ly B.V."/>
            <person name="Zhou Z."/>
            <person name="Ren Y."/>
            <person name="Wang J."/>
            <person name="Galperin M.Y."/>
            <person name="Omelchenko M.V."/>
            <person name="Wolf Y.I."/>
            <person name="Yutin N."/>
            <person name="Koonin E.V."/>
            <person name="Stott M.B."/>
            <person name="Mountain B.W."/>
            <person name="Crowe M.A."/>
            <person name="Smirnova A.V."/>
            <person name="Dunfield P.F."/>
            <person name="Feng L."/>
            <person name="Wang L."/>
            <person name="Alam M."/>
        </authorList>
    </citation>
    <scope>NUCLEOTIDE SEQUENCE [LARGE SCALE GENOMIC DNA]</scope>
    <source>
        <strain>Isolate V4</strain>
    </source>
</reference>
<feature type="chain" id="PRO_1000094700" description="UDP-N-acetylglucosamine 1-carboxyvinyltransferase">
    <location>
        <begin position="1"/>
        <end position="421"/>
    </location>
</feature>
<feature type="active site" description="Proton donor" evidence="1">
    <location>
        <position position="115"/>
    </location>
</feature>
<feature type="binding site" evidence="1">
    <location>
        <begin position="22"/>
        <end position="23"/>
    </location>
    <ligand>
        <name>phosphoenolpyruvate</name>
        <dbReference type="ChEBI" id="CHEBI:58702"/>
    </ligand>
</feature>
<feature type="binding site" evidence="1">
    <location>
        <position position="91"/>
    </location>
    <ligand>
        <name>UDP-N-acetyl-alpha-D-glucosamine</name>
        <dbReference type="ChEBI" id="CHEBI:57705"/>
    </ligand>
</feature>
<feature type="binding site" evidence="1">
    <location>
        <begin position="120"/>
        <end position="124"/>
    </location>
    <ligand>
        <name>UDP-N-acetyl-alpha-D-glucosamine</name>
        <dbReference type="ChEBI" id="CHEBI:57705"/>
    </ligand>
</feature>
<feature type="binding site" evidence="1">
    <location>
        <position position="306"/>
    </location>
    <ligand>
        <name>UDP-N-acetyl-alpha-D-glucosamine</name>
        <dbReference type="ChEBI" id="CHEBI:57705"/>
    </ligand>
</feature>
<feature type="binding site" evidence="1">
    <location>
        <position position="328"/>
    </location>
    <ligand>
        <name>UDP-N-acetyl-alpha-D-glucosamine</name>
        <dbReference type="ChEBI" id="CHEBI:57705"/>
    </ligand>
</feature>
<feature type="modified residue" description="2-(S-cysteinyl)pyruvic acid O-phosphothioketal" evidence="1">
    <location>
        <position position="115"/>
    </location>
</feature>
<organism>
    <name type="scientific">Methylacidiphilum infernorum (isolate V4)</name>
    <name type="common">Methylokorus infernorum (strain V4)</name>
    <dbReference type="NCBI Taxonomy" id="481448"/>
    <lineage>
        <taxon>Bacteria</taxon>
        <taxon>Pseudomonadati</taxon>
        <taxon>Verrucomicrobiota</taxon>
        <taxon>Methylacidiphilae</taxon>
        <taxon>Methylacidiphilales</taxon>
        <taxon>Methylacidiphilaceae</taxon>
        <taxon>Methylacidiphilum (ex Ratnadevi et al. 2023)</taxon>
    </lineage>
</organism>
<dbReference type="EC" id="2.5.1.7" evidence="1"/>
<dbReference type="EMBL" id="CP000975">
    <property type="protein sequence ID" value="ACD82484.1"/>
    <property type="molecule type" value="Genomic_DNA"/>
</dbReference>
<dbReference type="RefSeq" id="WP_012462766.1">
    <property type="nucleotide sequence ID" value="NC_010794.1"/>
</dbReference>
<dbReference type="SMR" id="B3DYW2"/>
<dbReference type="STRING" id="481448.Minf_0426"/>
<dbReference type="KEGG" id="min:Minf_0426"/>
<dbReference type="eggNOG" id="COG0766">
    <property type="taxonomic scope" value="Bacteria"/>
</dbReference>
<dbReference type="HOGENOM" id="CLU_027387_0_0_0"/>
<dbReference type="OrthoDB" id="9803760at2"/>
<dbReference type="UniPathway" id="UPA00219"/>
<dbReference type="Proteomes" id="UP000009149">
    <property type="component" value="Chromosome"/>
</dbReference>
<dbReference type="GO" id="GO:0005737">
    <property type="term" value="C:cytoplasm"/>
    <property type="evidence" value="ECO:0007669"/>
    <property type="project" value="UniProtKB-SubCell"/>
</dbReference>
<dbReference type="GO" id="GO:0008760">
    <property type="term" value="F:UDP-N-acetylglucosamine 1-carboxyvinyltransferase activity"/>
    <property type="evidence" value="ECO:0007669"/>
    <property type="project" value="UniProtKB-UniRule"/>
</dbReference>
<dbReference type="GO" id="GO:0051301">
    <property type="term" value="P:cell division"/>
    <property type="evidence" value="ECO:0007669"/>
    <property type="project" value="UniProtKB-KW"/>
</dbReference>
<dbReference type="GO" id="GO:0071555">
    <property type="term" value="P:cell wall organization"/>
    <property type="evidence" value="ECO:0007669"/>
    <property type="project" value="UniProtKB-KW"/>
</dbReference>
<dbReference type="GO" id="GO:0009252">
    <property type="term" value="P:peptidoglycan biosynthetic process"/>
    <property type="evidence" value="ECO:0007669"/>
    <property type="project" value="UniProtKB-UniRule"/>
</dbReference>
<dbReference type="GO" id="GO:0008360">
    <property type="term" value="P:regulation of cell shape"/>
    <property type="evidence" value="ECO:0007669"/>
    <property type="project" value="UniProtKB-KW"/>
</dbReference>
<dbReference type="GO" id="GO:0019277">
    <property type="term" value="P:UDP-N-acetylgalactosamine biosynthetic process"/>
    <property type="evidence" value="ECO:0007669"/>
    <property type="project" value="InterPro"/>
</dbReference>
<dbReference type="CDD" id="cd01555">
    <property type="entry name" value="UdpNAET"/>
    <property type="match status" value="1"/>
</dbReference>
<dbReference type="FunFam" id="3.65.10.10:FF:000001">
    <property type="entry name" value="UDP-N-acetylglucosamine 1-carboxyvinyltransferase"/>
    <property type="match status" value="1"/>
</dbReference>
<dbReference type="Gene3D" id="3.65.10.10">
    <property type="entry name" value="Enolpyruvate transferase domain"/>
    <property type="match status" value="2"/>
</dbReference>
<dbReference type="HAMAP" id="MF_00111">
    <property type="entry name" value="MurA"/>
    <property type="match status" value="1"/>
</dbReference>
<dbReference type="InterPro" id="IPR001986">
    <property type="entry name" value="Enolpyruvate_Tfrase_dom"/>
</dbReference>
<dbReference type="InterPro" id="IPR036968">
    <property type="entry name" value="Enolpyruvate_Tfrase_sf"/>
</dbReference>
<dbReference type="InterPro" id="IPR050068">
    <property type="entry name" value="MurA_subfamily"/>
</dbReference>
<dbReference type="InterPro" id="IPR013792">
    <property type="entry name" value="RNA3'P_cycl/enolpyr_Trfase_a/b"/>
</dbReference>
<dbReference type="InterPro" id="IPR005750">
    <property type="entry name" value="UDP_GlcNAc_COvinyl_MurA"/>
</dbReference>
<dbReference type="NCBIfam" id="TIGR01072">
    <property type="entry name" value="murA"/>
    <property type="match status" value="1"/>
</dbReference>
<dbReference type="NCBIfam" id="NF006873">
    <property type="entry name" value="PRK09369.1"/>
    <property type="match status" value="1"/>
</dbReference>
<dbReference type="PANTHER" id="PTHR43783">
    <property type="entry name" value="UDP-N-ACETYLGLUCOSAMINE 1-CARBOXYVINYLTRANSFERASE"/>
    <property type="match status" value="1"/>
</dbReference>
<dbReference type="PANTHER" id="PTHR43783:SF1">
    <property type="entry name" value="UDP-N-ACETYLGLUCOSAMINE 1-CARBOXYVINYLTRANSFERASE"/>
    <property type="match status" value="1"/>
</dbReference>
<dbReference type="Pfam" id="PF00275">
    <property type="entry name" value="EPSP_synthase"/>
    <property type="match status" value="1"/>
</dbReference>
<dbReference type="SUPFAM" id="SSF55205">
    <property type="entry name" value="EPT/RTPC-like"/>
    <property type="match status" value="1"/>
</dbReference>
<protein>
    <recommendedName>
        <fullName evidence="1">UDP-N-acetylglucosamine 1-carboxyvinyltransferase</fullName>
        <ecNumber evidence="1">2.5.1.7</ecNumber>
    </recommendedName>
    <alternativeName>
        <fullName evidence="1">Enoylpyruvate transferase</fullName>
    </alternativeName>
    <alternativeName>
        <fullName evidence="1">UDP-N-acetylglucosamine enolpyruvyl transferase</fullName>
        <shortName evidence="1">EPT</shortName>
    </alternativeName>
</protein>
<evidence type="ECO:0000255" key="1">
    <source>
        <dbReference type="HAMAP-Rule" id="MF_00111"/>
    </source>
</evidence>
<proteinExistence type="inferred from homology"/>
<gene>
    <name evidence="1" type="primary">murA</name>
    <name type="ordered locus">Minf_0426</name>
</gene>
<comment type="function">
    <text evidence="1">Cell wall formation. Adds enolpyruvyl to UDP-N-acetylglucosamine.</text>
</comment>
<comment type="catalytic activity">
    <reaction evidence="1">
        <text>phosphoenolpyruvate + UDP-N-acetyl-alpha-D-glucosamine = UDP-N-acetyl-3-O-(1-carboxyvinyl)-alpha-D-glucosamine + phosphate</text>
        <dbReference type="Rhea" id="RHEA:18681"/>
        <dbReference type="ChEBI" id="CHEBI:43474"/>
        <dbReference type="ChEBI" id="CHEBI:57705"/>
        <dbReference type="ChEBI" id="CHEBI:58702"/>
        <dbReference type="ChEBI" id="CHEBI:68483"/>
        <dbReference type="EC" id="2.5.1.7"/>
    </reaction>
</comment>
<comment type="pathway">
    <text evidence="1">Cell wall biogenesis; peptidoglycan biosynthesis.</text>
</comment>
<comment type="subcellular location">
    <subcellularLocation>
        <location evidence="1">Cytoplasm</location>
    </subcellularLocation>
</comment>
<comment type="similarity">
    <text evidence="1">Belongs to the EPSP synthase family. MurA subfamily.</text>
</comment>
<sequence length="421" mass="45138">MEKFIIKGGNPLEGKITISGSKNSALPILAATLLTPEECVIHRVPNLSDIRYMLEILKFLGAQVHYEKGTVRIKSKIVHSTAPYDLVRKMRASICILGPLIARCGQARVSLPGGCVIGDRPIDLHITGLQKLGADIEIIKGDVVAHGGILRGTSINLKGKYGSTVLGTDNVMMAACQAEGTTIIEGAACEPEVEDLAHFLSSMGAKISGMGTQQLIIEGVKELHGCEYTIITDRIEAGTFAVAAAMTKGNLLLEHAPVEHMGSVLEKLKDCGASIEIESQGIRVSRSGPLRAFEIVTAAYPGFPTDMQAQFCAMATVAEGTSKIVENIFPNRFMHISELKRLGAMIELSQNQALIHGTERLSGAPVMASDLRASAALVLAGLVAENTTEVHRVYHIDRGYEKIDEKLSSVGANITRVYSKI</sequence>
<accession>B3DYW2</accession>
<name>MURA_METI4</name>